<name>PSAJ_LOTJA</name>
<accession>Q9BBR3</accession>
<keyword id="KW-0150">Chloroplast</keyword>
<keyword id="KW-0472">Membrane</keyword>
<keyword id="KW-0602">Photosynthesis</keyword>
<keyword id="KW-0603">Photosystem I</keyword>
<keyword id="KW-0934">Plastid</keyword>
<keyword id="KW-0793">Thylakoid</keyword>
<keyword id="KW-0812">Transmembrane</keyword>
<keyword id="KW-1133">Transmembrane helix</keyword>
<proteinExistence type="inferred from homology"/>
<reference key="1">
    <citation type="journal article" date="2000" name="DNA Res.">
        <title>Complete structure of the chloroplast genome of a legume, Lotus japonicus.</title>
        <authorList>
            <person name="Kato T."/>
            <person name="Kaneko T."/>
            <person name="Sato S."/>
            <person name="Nakamura Y."/>
            <person name="Tabata S."/>
        </authorList>
    </citation>
    <scope>NUCLEOTIDE SEQUENCE [LARGE SCALE GENOMIC DNA]</scope>
    <source>
        <strain>cv. Miyakojima MG-20</strain>
    </source>
</reference>
<organism>
    <name type="scientific">Lotus japonicus</name>
    <name type="common">Lotus corniculatus var. japonicus</name>
    <dbReference type="NCBI Taxonomy" id="34305"/>
    <lineage>
        <taxon>Eukaryota</taxon>
        <taxon>Viridiplantae</taxon>
        <taxon>Streptophyta</taxon>
        <taxon>Embryophyta</taxon>
        <taxon>Tracheophyta</taxon>
        <taxon>Spermatophyta</taxon>
        <taxon>Magnoliopsida</taxon>
        <taxon>eudicotyledons</taxon>
        <taxon>Gunneridae</taxon>
        <taxon>Pentapetalae</taxon>
        <taxon>rosids</taxon>
        <taxon>fabids</taxon>
        <taxon>Fabales</taxon>
        <taxon>Fabaceae</taxon>
        <taxon>Papilionoideae</taxon>
        <taxon>50 kb inversion clade</taxon>
        <taxon>NPAAA clade</taxon>
        <taxon>Hologalegina</taxon>
        <taxon>robinioid clade</taxon>
        <taxon>Loteae</taxon>
        <taxon>Lotus</taxon>
    </lineage>
</organism>
<geneLocation type="chloroplast"/>
<gene>
    <name evidence="1" type="primary">psaJ</name>
</gene>
<protein>
    <recommendedName>
        <fullName evidence="1">Photosystem I reaction center subunit IX</fullName>
    </recommendedName>
    <alternativeName>
        <fullName evidence="1">PSI-J</fullName>
    </alternativeName>
</protein>
<dbReference type="EMBL" id="AP002983">
    <property type="protein sequence ID" value="BAB33216.1"/>
    <property type="molecule type" value="Genomic_DNA"/>
</dbReference>
<dbReference type="RefSeq" id="NP_084818.1">
    <property type="nucleotide sequence ID" value="NC_002694.1"/>
</dbReference>
<dbReference type="SMR" id="Q9BBR3"/>
<dbReference type="GeneID" id="802913"/>
<dbReference type="GO" id="GO:0009535">
    <property type="term" value="C:chloroplast thylakoid membrane"/>
    <property type="evidence" value="ECO:0007669"/>
    <property type="project" value="UniProtKB-SubCell"/>
</dbReference>
<dbReference type="GO" id="GO:0009522">
    <property type="term" value="C:photosystem I"/>
    <property type="evidence" value="ECO:0007669"/>
    <property type="project" value="UniProtKB-KW"/>
</dbReference>
<dbReference type="GO" id="GO:0015979">
    <property type="term" value="P:photosynthesis"/>
    <property type="evidence" value="ECO:0007669"/>
    <property type="project" value="UniProtKB-UniRule"/>
</dbReference>
<dbReference type="FunFam" id="1.20.5.510:FF:000001">
    <property type="entry name" value="Photosystem I reaction center subunit IX"/>
    <property type="match status" value="1"/>
</dbReference>
<dbReference type="Gene3D" id="1.20.5.510">
    <property type="entry name" value="Single helix bin"/>
    <property type="match status" value="1"/>
</dbReference>
<dbReference type="HAMAP" id="MF_00522">
    <property type="entry name" value="PSI_PsaJ"/>
    <property type="match status" value="1"/>
</dbReference>
<dbReference type="InterPro" id="IPR002615">
    <property type="entry name" value="PSI_PsaJ"/>
</dbReference>
<dbReference type="InterPro" id="IPR036062">
    <property type="entry name" value="PSI_PsaJ_sf"/>
</dbReference>
<dbReference type="PANTHER" id="PTHR36082">
    <property type="match status" value="1"/>
</dbReference>
<dbReference type="PANTHER" id="PTHR36082:SF2">
    <property type="entry name" value="PHOTOSYSTEM I REACTION CENTER SUBUNIT IX"/>
    <property type="match status" value="1"/>
</dbReference>
<dbReference type="Pfam" id="PF01701">
    <property type="entry name" value="PSI_PsaJ"/>
    <property type="match status" value="1"/>
</dbReference>
<dbReference type="SUPFAM" id="SSF81544">
    <property type="entry name" value="Subunit IX of photosystem I reaction centre, PsaJ"/>
    <property type="match status" value="1"/>
</dbReference>
<feature type="chain" id="PRO_0000207794" description="Photosystem I reaction center subunit IX">
    <location>
        <begin position="1"/>
        <end position="44"/>
    </location>
</feature>
<feature type="transmembrane region" description="Helical" evidence="1">
    <location>
        <begin position="7"/>
        <end position="27"/>
    </location>
</feature>
<sequence length="44" mass="5005">MRDLKTYLSVAPVVSTLWFAALAGLLIEINRLFPDALIFPFFSF</sequence>
<evidence type="ECO:0000255" key="1">
    <source>
        <dbReference type="HAMAP-Rule" id="MF_00522"/>
    </source>
</evidence>
<comment type="function">
    <text evidence="1">May help in the organization of the PsaE and PsaF subunits.</text>
</comment>
<comment type="subcellular location">
    <subcellularLocation>
        <location evidence="1">Plastid</location>
        <location evidence="1">Chloroplast thylakoid membrane</location>
        <topology evidence="1">Single-pass membrane protein</topology>
    </subcellularLocation>
</comment>
<comment type="similarity">
    <text evidence="1">Belongs to the PsaJ family.</text>
</comment>